<reference key="1">
    <citation type="journal article" date="2013" name="Toxins">
        <title>A proteomics and transcriptomics investigation of the venom from the barychelid spider Trittame loki (brush-foot trapdoor).</title>
        <authorList>
            <person name="Undheim E.A."/>
            <person name="Sunagar K."/>
            <person name="Herzig V."/>
            <person name="Kely L."/>
            <person name="Low D.H."/>
            <person name="Jackson T.N."/>
            <person name="Jones A."/>
            <person name="Kurniawan N."/>
            <person name="King G.F."/>
            <person name="Ali S.A."/>
            <person name="Antunes A."/>
            <person name="Ruder T."/>
            <person name="Fry B.G."/>
        </authorList>
    </citation>
    <scope>NUCLEOTIDE SEQUENCE [MRNA]</scope>
    <source>
        <tissue>Venom gland</tissue>
    </source>
</reference>
<keyword id="KW-0165">Cleavage on pair of basic residues</keyword>
<keyword id="KW-1015">Disulfide bond</keyword>
<keyword id="KW-0872">Ion channel impairing toxin</keyword>
<keyword id="KW-0960">Knottin</keyword>
<keyword id="KW-0964">Secreted</keyword>
<keyword id="KW-0732">Signal</keyword>
<keyword id="KW-0800">Toxin</keyword>
<protein>
    <recommendedName>
        <fullName>U16-barytoxin-Tl1b</fullName>
        <shortName>U16-BATX-Tl1b</shortName>
    </recommendedName>
    <alternativeName>
        <fullName>Toxin ICK-26</fullName>
    </alternativeName>
</protein>
<comment type="function">
    <text evidence="3">Ion channel inhibitor.</text>
</comment>
<comment type="subcellular location">
    <subcellularLocation>
        <location evidence="1">Secreted</location>
    </subcellularLocation>
</comment>
<comment type="tissue specificity">
    <text>Expressed by the venom gland.</text>
</comment>
<comment type="domain">
    <text evidence="1">The presence of a 'disulfide through disulfide knot' structurally defines this protein as a knottin.</text>
</comment>
<comment type="similarity">
    <text evidence="3">Belongs to the neurotoxin 14 (magi-1) family. 06 (ICK-Trit) subfamily.</text>
</comment>
<organism>
    <name type="scientific">Trittame loki</name>
    <name type="common">Brush-footed trapdoor spider</name>
    <dbReference type="NCBI Taxonomy" id="1295018"/>
    <lineage>
        <taxon>Eukaryota</taxon>
        <taxon>Metazoa</taxon>
        <taxon>Ecdysozoa</taxon>
        <taxon>Arthropoda</taxon>
        <taxon>Chelicerata</taxon>
        <taxon>Arachnida</taxon>
        <taxon>Araneae</taxon>
        <taxon>Mygalomorphae</taxon>
        <taxon>Barychelidae</taxon>
        <taxon>Trittame</taxon>
    </lineage>
</organism>
<evidence type="ECO:0000250" key="1"/>
<evidence type="ECO:0000255" key="2"/>
<evidence type="ECO:0000305" key="3"/>
<feature type="signal peptide" evidence="2">
    <location>
        <begin position="1"/>
        <end position="20"/>
    </location>
</feature>
<feature type="propeptide" id="PRO_0000435149" evidence="3">
    <location>
        <begin position="21"/>
        <end position="74"/>
    </location>
</feature>
<feature type="chain" id="PRO_0000429233" description="U16-barytoxin-Tl1b">
    <location>
        <begin position="75"/>
        <end position="116"/>
    </location>
</feature>
<feature type="disulfide bond" evidence="1">
    <location>
        <begin position="75"/>
        <end position="90"/>
    </location>
</feature>
<feature type="disulfide bond" evidence="1">
    <location>
        <begin position="82"/>
        <end position="95"/>
    </location>
</feature>
<feature type="disulfide bond" evidence="1">
    <location>
        <begin position="89"/>
        <end position="110"/>
    </location>
</feature>
<proteinExistence type="evidence at transcript level"/>
<sequence>MKTIIVFLSLLVLATKFGDAKEGVNQKQKKEVTQNEFREEYLNEMAAMSLVQQLEAIERALFENEAGRNSRQKRCNGENVPCGPNHSTCCSGLSCEETFGYGWWYASPYCVKPSKG</sequence>
<dbReference type="EMBL" id="GAQE01000029">
    <property type="protein sequence ID" value="JAB84525.1"/>
    <property type="molecule type" value="Transcribed_RNA"/>
</dbReference>
<dbReference type="ArachnoServer" id="AS002053">
    <property type="toxin name" value="U16-barytoxin-Tl1b"/>
</dbReference>
<dbReference type="GO" id="GO:0005576">
    <property type="term" value="C:extracellular region"/>
    <property type="evidence" value="ECO:0007669"/>
    <property type="project" value="UniProtKB-SubCell"/>
</dbReference>
<dbReference type="GO" id="GO:0019871">
    <property type="term" value="F:sodium channel inhibitor activity"/>
    <property type="evidence" value="ECO:0007669"/>
    <property type="project" value="InterPro"/>
</dbReference>
<dbReference type="GO" id="GO:0090729">
    <property type="term" value="F:toxin activity"/>
    <property type="evidence" value="ECO:0007669"/>
    <property type="project" value="UniProtKB-KW"/>
</dbReference>
<dbReference type="InterPro" id="IPR012627">
    <property type="entry name" value="Toxin_22"/>
</dbReference>
<dbReference type="Pfam" id="PF08092">
    <property type="entry name" value="Toxin_22"/>
    <property type="match status" value="1"/>
</dbReference>
<name>ICK26_TRILK</name>
<accession>W4VRU8</accession>